<protein>
    <recommendedName>
        <fullName evidence="1">Aspartyl/glutamyl-tRNA(Asn/Gln) amidotransferase subunit B</fullName>
        <shortName evidence="1">Asp/Glu-ADT subunit B</shortName>
        <ecNumber evidence="1">6.3.5.-</ecNumber>
    </recommendedName>
</protein>
<evidence type="ECO:0000255" key="1">
    <source>
        <dbReference type="HAMAP-Rule" id="MF_00121"/>
    </source>
</evidence>
<accession>B5ZC51</accession>
<sequence length="477" mass="55028">MQNFEVIIGIEVHTALNTKTKMFSNTPTSHKSMANTLINEIDLALPGTLPSVNQEVVHKGLFLANALHMHTNHQFIAFDRKHYYYLDLPKGYQITQNYFPIGQNGYIQITDENNNPKKIRIKQIHLEEDTAKQTSVNNQVYLDYNRAGWPLIEIVSEADLRSAQETVLFLEELRKILLFNDISDAKMEDGSLRVDVNISIRPRGAKSFGTKVEIKNINSISNVAKAINYEYNRQLNLILLNQSVEQQTRRFDDSTNTTVFMRSKNDAINYRYIRELNIAPIYLSDEYVSQLLSTKPYSINDLRQELLQKGLVSSAIEQLLGDGPLFKAFKYVNKIVNNPSSVYKWLCLEFIGLINKNTQIIEDISMELLQKIGAMIVLFDQTLINGKQTKTILEKIYLTNKDPQTLIKELGFEQITDENEITNLWNQILANNQEMLLQYEERPDRVEKFFMGEMMKLTKAQANPTISFNILKKILQK</sequence>
<reference key="1">
    <citation type="submission" date="2008-10" db="EMBL/GenBank/DDBJ databases">
        <title>Genome sequence of Ureaplasma urealyticum serovar 10 ATCC-33699.</title>
        <authorList>
            <person name="Shrivastava S."/>
            <person name="Methe B.A."/>
            <person name="Glass J."/>
            <person name="White K."/>
            <person name="Duffy L.B."/>
        </authorList>
    </citation>
    <scope>NUCLEOTIDE SEQUENCE [LARGE SCALE GENOMIC DNA]</scope>
    <source>
        <strain>ATCC 33699 / Western</strain>
    </source>
</reference>
<gene>
    <name evidence="1" type="primary">gatB</name>
    <name type="ordered locus">UUR10_0635</name>
</gene>
<organism>
    <name type="scientific">Ureaplasma urealyticum serovar 10 (strain ATCC 33699 / Western)</name>
    <dbReference type="NCBI Taxonomy" id="565575"/>
    <lineage>
        <taxon>Bacteria</taxon>
        <taxon>Bacillati</taxon>
        <taxon>Mycoplasmatota</taxon>
        <taxon>Mycoplasmoidales</taxon>
        <taxon>Mycoplasmoidaceae</taxon>
        <taxon>Ureaplasma</taxon>
    </lineage>
</organism>
<proteinExistence type="inferred from homology"/>
<comment type="function">
    <text evidence="1">Allows the formation of correctly charged Asn-tRNA(Asn) or Gln-tRNA(Gln) through the transamidation of misacylated Asp-tRNA(Asn) or Glu-tRNA(Gln) in organisms which lack either or both of asparaginyl-tRNA or glutaminyl-tRNA synthetases. The reaction takes place in the presence of glutamine and ATP through an activated phospho-Asp-tRNA(Asn) or phospho-Glu-tRNA(Gln).</text>
</comment>
<comment type="catalytic activity">
    <reaction evidence="1">
        <text>L-glutamyl-tRNA(Gln) + L-glutamine + ATP + H2O = L-glutaminyl-tRNA(Gln) + L-glutamate + ADP + phosphate + H(+)</text>
        <dbReference type="Rhea" id="RHEA:17521"/>
        <dbReference type="Rhea" id="RHEA-COMP:9681"/>
        <dbReference type="Rhea" id="RHEA-COMP:9684"/>
        <dbReference type="ChEBI" id="CHEBI:15377"/>
        <dbReference type="ChEBI" id="CHEBI:15378"/>
        <dbReference type="ChEBI" id="CHEBI:29985"/>
        <dbReference type="ChEBI" id="CHEBI:30616"/>
        <dbReference type="ChEBI" id="CHEBI:43474"/>
        <dbReference type="ChEBI" id="CHEBI:58359"/>
        <dbReference type="ChEBI" id="CHEBI:78520"/>
        <dbReference type="ChEBI" id="CHEBI:78521"/>
        <dbReference type="ChEBI" id="CHEBI:456216"/>
    </reaction>
</comment>
<comment type="catalytic activity">
    <reaction evidence="1">
        <text>L-aspartyl-tRNA(Asn) + L-glutamine + ATP + H2O = L-asparaginyl-tRNA(Asn) + L-glutamate + ADP + phosphate + 2 H(+)</text>
        <dbReference type="Rhea" id="RHEA:14513"/>
        <dbReference type="Rhea" id="RHEA-COMP:9674"/>
        <dbReference type="Rhea" id="RHEA-COMP:9677"/>
        <dbReference type="ChEBI" id="CHEBI:15377"/>
        <dbReference type="ChEBI" id="CHEBI:15378"/>
        <dbReference type="ChEBI" id="CHEBI:29985"/>
        <dbReference type="ChEBI" id="CHEBI:30616"/>
        <dbReference type="ChEBI" id="CHEBI:43474"/>
        <dbReference type="ChEBI" id="CHEBI:58359"/>
        <dbReference type="ChEBI" id="CHEBI:78515"/>
        <dbReference type="ChEBI" id="CHEBI:78516"/>
        <dbReference type="ChEBI" id="CHEBI:456216"/>
    </reaction>
</comment>
<comment type="subunit">
    <text evidence="1">Heterotrimer of A, B and C subunits.</text>
</comment>
<comment type="similarity">
    <text evidence="1">Belongs to the GatB/GatE family. GatB subfamily.</text>
</comment>
<name>GATB_UREU1</name>
<keyword id="KW-0067">ATP-binding</keyword>
<keyword id="KW-0436">Ligase</keyword>
<keyword id="KW-0547">Nucleotide-binding</keyword>
<keyword id="KW-0648">Protein biosynthesis</keyword>
<feature type="chain" id="PRO_1000095254" description="Aspartyl/glutamyl-tRNA(Asn/Gln) amidotransferase subunit B">
    <location>
        <begin position="1"/>
        <end position="477"/>
    </location>
</feature>
<dbReference type="EC" id="6.3.5.-" evidence="1"/>
<dbReference type="EMBL" id="CP001184">
    <property type="protein sequence ID" value="ACI60262.1"/>
    <property type="molecule type" value="Genomic_DNA"/>
</dbReference>
<dbReference type="RefSeq" id="WP_012560327.1">
    <property type="nucleotide sequence ID" value="NC_011374.1"/>
</dbReference>
<dbReference type="SMR" id="B5ZC51"/>
<dbReference type="STRING" id="565575.UUR10_0635"/>
<dbReference type="KEGG" id="uue:UUR10_0635"/>
<dbReference type="eggNOG" id="COG0064">
    <property type="taxonomic scope" value="Bacteria"/>
</dbReference>
<dbReference type="HOGENOM" id="CLU_019240_0_0_14"/>
<dbReference type="OrthoDB" id="9804078at2"/>
<dbReference type="Proteomes" id="UP000002018">
    <property type="component" value="Chromosome"/>
</dbReference>
<dbReference type="GO" id="GO:0050566">
    <property type="term" value="F:asparaginyl-tRNA synthase (glutamine-hydrolyzing) activity"/>
    <property type="evidence" value="ECO:0007669"/>
    <property type="project" value="RHEA"/>
</dbReference>
<dbReference type="GO" id="GO:0005524">
    <property type="term" value="F:ATP binding"/>
    <property type="evidence" value="ECO:0007669"/>
    <property type="project" value="UniProtKB-KW"/>
</dbReference>
<dbReference type="GO" id="GO:0050567">
    <property type="term" value="F:glutaminyl-tRNA synthase (glutamine-hydrolyzing) activity"/>
    <property type="evidence" value="ECO:0007669"/>
    <property type="project" value="UniProtKB-UniRule"/>
</dbReference>
<dbReference type="GO" id="GO:0070681">
    <property type="term" value="P:glutaminyl-tRNAGln biosynthesis via transamidation"/>
    <property type="evidence" value="ECO:0007669"/>
    <property type="project" value="TreeGrafter"/>
</dbReference>
<dbReference type="GO" id="GO:0006412">
    <property type="term" value="P:translation"/>
    <property type="evidence" value="ECO:0007669"/>
    <property type="project" value="UniProtKB-UniRule"/>
</dbReference>
<dbReference type="Gene3D" id="1.10.10.410">
    <property type="match status" value="1"/>
</dbReference>
<dbReference type="HAMAP" id="MF_00121">
    <property type="entry name" value="GatB"/>
    <property type="match status" value="1"/>
</dbReference>
<dbReference type="InterPro" id="IPR017959">
    <property type="entry name" value="Asn/Gln-tRNA_amidoTrfase_suB/E"/>
</dbReference>
<dbReference type="InterPro" id="IPR006075">
    <property type="entry name" value="Asn/Gln-tRNA_Trfase_suB/E_cat"/>
</dbReference>
<dbReference type="InterPro" id="IPR018027">
    <property type="entry name" value="Asn/Gln_amidotransferase"/>
</dbReference>
<dbReference type="InterPro" id="IPR003789">
    <property type="entry name" value="Asn/Gln_tRNA_amidoTrase-B-like"/>
</dbReference>
<dbReference type="InterPro" id="IPR004413">
    <property type="entry name" value="GatB"/>
</dbReference>
<dbReference type="InterPro" id="IPR023168">
    <property type="entry name" value="GatB_Yqey_C_2"/>
</dbReference>
<dbReference type="InterPro" id="IPR017958">
    <property type="entry name" value="Gln-tRNA_amidoTrfase_suB_CS"/>
</dbReference>
<dbReference type="InterPro" id="IPR014746">
    <property type="entry name" value="Gln_synth/guanido_kin_cat_dom"/>
</dbReference>
<dbReference type="NCBIfam" id="TIGR00133">
    <property type="entry name" value="gatB"/>
    <property type="match status" value="1"/>
</dbReference>
<dbReference type="NCBIfam" id="NF004012">
    <property type="entry name" value="PRK05477.1-2"/>
    <property type="match status" value="1"/>
</dbReference>
<dbReference type="NCBIfam" id="NF004014">
    <property type="entry name" value="PRK05477.1-4"/>
    <property type="match status" value="1"/>
</dbReference>
<dbReference type="PANTHER" id="PTHR11659">
    <property type="entry name" value="GLUTAMYL-TRNA GLN AMIDOTRANSFERASE SUBUNIT B MITOCHONDRIAL AND PROKARYOTIC PET112-RELATED"/>
    <property type="match status" value="1"/>
</dbReference>
<dbReference type="PANTHER" id="PTHR11659:SF0">
    <property type="entry name" value="GLUTAMYL-TRNA(GLN) AMIDOTRANSFERASE SUBUNIT B, MITOCHONDRIAL"/>
    <property type="match status" value="1"/>
</dbReference>
<dbReference type="Pfam" id="PF02934">
    <property type="entry name" value="GatB_N"/>
    <property type="match status" value="1"/>
</dbReference>
<dbReference type="Pfam" id="PF02637">
    <property type="entry name" value="GatB_Yqey"/>
    <property type="match status" value="1"/>
</dbReference>
<dbReference type="SMART" id="SM00845">
    <property type="entry name" value="GatB_Yqey"/>
    <property type="match status" value="1"/>
</dbReference>
<dbReference type="SUPFAM" id="SSF89095">
    <property type="entry name" value="GatB/YqeY motif"/>
    <property type="match status" value="1"/>
</dbReference>
<dbReference type="SUPFAM" id="SSF55931">
    <property type="entry name" value="Glutamine synthetase/guanido kinase"/>
    <property type="match status" value="1"/>
</dbReference>
<dbReference type="PROSITE" id="PS01234">
    <property type="entry name" value="GATB"/>
    <property type="match status" value="1"/>
</dbReference>